<name>PIA2_PLEOS</name>
<protein>
    <recommendedName>
        <fullName>Serine proteinase inhibitor IA-2</fullName>
    </recommendedName>
    <alternativeName>
        <fullName>Proteinase A inhibitor 2</fullName>
    </alternativeName>
</protein>
<feature type="chain" id="PRO_0000212792" description="Serine proteinase inhibitor IA-2">
    <location>
        <begin position="1"/>
        <end position="76"/>
    </location>
</feature>
<feature type="modified residue" description="N-acetylserine" evidence="1">
    <location>
        <position position="1"/>
    </location>
</feature>
<comment type="function">
    <text>Specifically inhibits an intracellular serine proteinase (proteinase A).</text>
</comment>
<comment type="similarity">
    <text evidence="2">Belongs to the protease inhibitor I9 family.</text>
</comment>
<organism>
    <name type="scientific">Pleurotus ostreatus</name>
    <name type="common">Oyster mushroom</name>
    <name type="synonym">White-rot fungus</name>
    <dbReference type="NCBI Taxonomy" id="5322"/>
    <lineage>
        <taxon>Eukaryota</taxon>
        <taxon>Fungi</taxon>
        <taxon>Dikarya</taxon>
        <taxon>Basidiomycota</taxon>
        <taxon>Agaricomycotina</taxon>
        <taxon>Agaricomycetes</taxon>
        <taxon>Agaricomycetidae</taxon>
        <taxon>Agaricales</taxon>
        <taxon>Pleurotineae</taxon>
        <taxon>Pleurotaceae</taxon>
        <taxon>Pleurotus</taxon>
    </lineage>
</organism>
<proteinExistence type="evidence at protein level"/>
<reference key="1">
    <citation type="journal article" date="1995" name="Arch. Biochem. Biophys.">
        <title>The complete amino acid sequences of two serine proteinase inhibitors from the fruiting bodies of a basidiomycete, Pleurotus ostreatus.</title>
        <authorList>
            <person name="Dohmae N."/>
            <person name="Takio K."/>
            <person name="Tsumuraya Y."/>
            <person name="Hashimoto Y."/>
        </authorList>
    </citation>
    <scope>PROTEIN SEQUENCE</scope>
    <scope>ACETYLATION AT SER-1</scope>
</reference>
<sequence>SAGKFIVIFKNGVSDDKIRETKDEVIAEGGTITNEYNMPGMKGFAGELTPQSLTKFQGLQGDLIDSIEEDGIVTTQ</sequence>
<keyword id="KW-0007">Acetylation</keyword>
<keyword id="KW-0903">Direct protein sequencing</keyword>
<keyword id="KW-0646">Protease inhibitor</keyword>
<keyword id="KW-0722">Serine protease inhibitor</keyword>
<accession>Q7M4T5</accession>
<evidence type="ECO:0000269" key="1">
    <source>
    </source>
</evidence>
<evidence type="ECO:0000305" key="2"/>
<dbReference type="PIR" id="S69163">
    <property type="entry name" value="S69163"/>
</dbReference>
<dbReference type="SMR" id="Q7M4T5"/>
<dbReference type="MEROPS" id="I09.002"/>
<dbReference type="iPTMnet" id="Q7M4T5"/>
<dbReference type="VEuPathDB" id="FungiDB:PC9H_007355"/>
<dbReference type="VEuPathDB" id="FungiDB:PLEOSDRAFT_1089399"/>
<dbReference type="GO" id="GO:0004867">
    <property type="term" value="F:serine-type endopeptidase inhibitor activity"/>
    <property type="evidence" value="ECO:0007669"/>
    <property type="project" value="UniProtKB-KW"/>
</dbReference>
<dbReference type="GO" id="GO:0042144">
    <property type="term" value="P:vacuole fusion, non-autophagic"/>
    <property type="evidence" value="ECO:0007669"/>
    <property type="project" value="TreeGrafter"/>
</dbReference>
<dbReference type="Gene3D" id="3.30.70.80">
    <property type="entry name" value="Peptidase S8 propeptide/proteinase inhibitor I9"/>
    <property type="match status" value="1"/>
</dbReference>
<dbReference type="InterPro" id="IPR052471">
    <property type="entry name" value="PBI_I9"/>
</dbReference>
<dbReference type="InterPro" id="IPR037045">
    <property type="entry name" value="S8pro/Inhibitor_I9_sf"/>
</dbReference>
<dbReference type="PANTHER" id="PTHR28288">
    <property type="entry name" value="PROTEASE B INHIBITOR 2"/>
    <property type="match status" value="1"/>
</dbReference>
<dbReference type="PANTHER" id="PTHR28288:SF2">
    <property type="entry name" value="PROTEASE B INHIBITOR 2"/>
    <property type="match status" value="1"/>
</dbReference>
<dbReference type="SUPFAM" id="SSF54897">
    <property type="entry name" value="Protease propeptides/inhibitors"/>
    <property type="match status" value="1"/>
</dbReference>